<gene>
    <name evidence="1" type="primary">gpt</name>
    <name type="ordered locus">VF_0738</name>
</gene>
<dbReference type="EC" id="2.4.2.-" evidence="1"/>
<dbReference type="EC" id="2.4.2.22" evidence="1"/>
<dbReference type="EMBL" id="CP000020">
    <property type="protein sequence ID" value="AAW85233.1"/>
    <property type="molecule type" value="Genomic_DNA"/>
</dbReference>
<dbReference type="RefSeq" id="WP_005418150.1">
    <property type="nucleotide sequence ID" value="NZ_CAWLES010000001.1"/>
</dbReference>
<dbReference type="RefSeq" id="YP_204121.1">
    <property type="nucleotide sequence ID" value="NC_006840.2"/>
</dbReference>
<dbReference type="SMR" id="Q5E6W3"/>
<dbReference type="STRING" id="312309.VF_0738"/>
<dbReference type="EnsemblBacteria" id="AAW85233">
    <property type="protein sequence ID" value="AAW85233"/>
    <property type="gene ID" value="VF_0738"/>
</dbReference>
<dbReference type="GeneID" id="54163392"/>
<dbReference type="KEGG" id="vfi:VF_0738"/>
<dbReference type="PATRIC" id="fig|312309.11.peg.731"/>
<dbReference type="eggNOG" id="COG2236">
    <property type="taxonomic scope" value="Bacteria"/>
</dbReference>
<dbReference type="HOGENOM" id="CLU_080904_3_0_6"/>
<dbReference type="OrthoDB" id="9789690at2"/>
<dbReference type="UniPathway" id="UPA00602">
    <property type="reaction ID" value="UER00658"/>
</dbReference>
<dbReference type="UniPathway" id="UPA00909">
    <property type="reaction ID" value="UER00887"/>
</dbReference>
<dbReference type="Proteomes" id="UP000000537">
    <property type="component" value="Chromosome I"/>
</dbReference>
<dbReference type="GO" id="GO:0005829">
    <property type="term" value="C:cytosol"/>
    <property type="evidence" value="ECO:0007669"/>
    <property type="project" value="TreeGrafter"/>
</dbReference>
<dbReference type="GO" id="GO:0005886">
    <property type="term" value="C:plasma membrane"/>
    <property type="evidence" value="ECO:0007669"/>
    <property type="project" value="UniProtKB-SubCell"/>
</dbReference>
<dbReference type="GO" id="GO:0052657">
    <property type="term" value="F:guanine phosphoribosyltransferase activity"/>
    <property type="evidence" value="ECO:0007669"/>
    <property type="project" value="RHEA"/>
</dbReference>
<dbReference type="GO" id="GO:0004422">
    <property type="term" value="F:hypoxanthine phosphoribosyltransferase activity"/>
    <property type="evidence" value="ECO:0007669"/>
    <property type="project" value="RHEA"/>
</dbReference>
<dbReference type="GO" id="GO:0000287">
    <property type="term" value="F:magnesium ion binding"/>
    <property type="evidence" value="ECO:0007669"/>
    <property type="project" value="UniProtKB-UniRule"/>
</dbReference>
<dbReference type="GO" id="GO:0000310">
    <property type="term" value="F:xanthine phosphoribosyltransferase activity"/>
    <property type="evidence" value="ECO:0007669"/>
    <property type="project" value="UniProtKB-UniRule"/>
</dbReference>
<dbReference type="GO" id="GO:0032263">
    <property type="term" value="P:GMP salvage"/>
    <property type="evidence" value="ECO:0007669"/>
    <property type="project" value="UniProtKB-UniRule"/>
</dbReference>
<dbReference type="GO" id="GO:0032264">
    <property type="term" value="P:IMP salvage"/>
    <property type="evidence" value="ECO:0007669"/>
    <property type="project" value="TreeGrafter"/>
</dbReference>
<dbReference type="GO" id="GO:0006166">
    <property type="term" value="P:purine ribonucleoside salvage"/>
    <property type="evidence" value="ECO:0007669"/>
    <property type="project" value="UniProtKB-KW"/>
</dbReference>
<dbReference type="GO" id="GO:0032265">
    <property type="term" value="P:XMP salvage"/>
    <property type="evidence" value="ECO:0007669"/>
    <property type="project" value="UniProtKB-UniRule"/>
</dbReference>
<dbReference type="CDD" id="cd06223">
    <property type="entry name" value="PRTases_typeI"/>
    <property type="match status" value="1"/>
</dbReference>
<dbReference type="Gene3D" id="3.40.50.2020">
    <property type="match status" value="1"/>
</dbReference>
<dbReference type="HAMAP" id="MF_01903">
    <property type="entry name" value="XGPRT"/>
    <property type="match status" value="1"/>
</dbReference>
<dbReference type="InterPro" id="IPR000836">
    <property type="entry name" value="PRibTrfase_dom"/>
</dbReference>
<dbReference type="InterPro" id="IPR029057">
    <property type="entry name" value="PRTase-like"/>
</dbReference>
<dbReference type="InterPro" id="IPR023747">
    <property type="entry name" value="Xanthine_Guanine_PRibTrfase"/>
</dbReference>
<dbReference type="NCBIfam" id="NF006613">
    <property type="entry name" value="PRK09177.1"/>
    <property type="match status" value="1"/>
</dbReference>
<dbReference type="PANTHER" id="PTHR39563">
    <property type="entry name" value="XANTHINE PHOSPHORIBOSYLTRANSFERASE"/>
    <property type="match status" value="1"/>
</dbReference>
<dbReference type="PANTHER" id="PTHR39563:SF1">
    <property type="entry name" value="XANTHINE-GUANINE PHOSPHORIBOSYLTRANSFERASE"/>
    <property type="match status" value="1"/>
</dbReference>
<dbReference type="Pfam" id="PF00156">
    <property type="entry name" value="Pribosyltran"/>
    <property type="match status" value="1"/>
</dbReference>
<dbReference type="SUPFAM" id="SSF53271">
    <property type="entry name" value="PRTase-like"/>
    <property type="match status" value="1"/>
</dbReference>
<dbReference type="PROSITE" id="PS00103">
    <property type="entry name" value="PUR_PYR_PR_TRANSFER"/>
    <property type="match status" value="1"/>
</dbReference>
<name>XGPT_ALIF1</name>
<protein>
    <recommendedName>
        <fullName evidence="1">Xanthine-guanine phosphoribosyltransferase</fullName>
        <shortName evidence="1">XGPRT</shortName>
        <ecNumber evidence="1">2.4.2.-</ecNumber>
        <ecNumber evidence="1">2.4.2.22</ecNumber>
    </recommendedName>
    <alternativeName>
        <fullName evidence="1">Xanthine phosphoribosyltransferase</fullName>
    </alternativeName>
</protein>
<comment type="function">
    <text evidence="1">Purine salvage pathway enzyme that catalyzes the transfer of the ribosyl-5-phosphate group from 5-phospho-alpha-D-ribose 1-diphosphate (PRPP) to the N9 position of the 6-oxopurines guanine and xanthine to form the corresponding ribonucleotides GMP (guanosine 5'-monophosphate) and XMP (xanthosine 5'-monophosphate), with the release of PPi. To a lesser extent, also acts on hypoxanthine.</text>
</comment>
<comment type="catalytic activity">
    <reaction evidence="1">
        <text>GMP + diphosphate = guanine + 5-phospho-alpha-D-ribose 1-diphosphate</text>
        <dbReference type="Rhea" id="RHEA:25424"/>
        <dbReference type="ChEBI" id="CHEBI:16235"/>
        <dbReference type="ChEBI" id="CHEBI:33019"/>
        <dbReference type="ChEBI" id="CHEBI:58017"/>
        <dbReference type="ChEBI" id="CHEBI:58115"/>
    </reaction>
    <physiologicalReaction direction="right-to-left" evidence="1">
        <dbReference type="Rhea" id="RHEA:25426"/>
    </physiologicalReaction>
</comment>
<comment type="catalytic activity">
    <reaction evidence="1">
        <text>XMP + diphosphate = xanthine + 5-phospho-alpha-D-ribose 1-diphosphate</text>
        <dbReference type="Rhea" id="RHEA:10800"/>
        <dbReference type="ChEBI" id="CHEBI:17712"/>
        <dbReference type="ChEBI" id="CHEBI:33019"/>
        <dbReference type="ChEBI" id="CHEBI:57464"/>
        <dbReference type="ChEBI" id="CHEBI:58017"/>
        <dbReference type="EC" id="2.4.2.22"/>
    </reaction>
    <physiologicalReaction direction="right-to-left" evidence="1">
        <dbReference type="Rhea" id="RHEA:10802"/>
    </physiologicalReaction>
</comment>
<comment type="catalytic activity">
    <reaction evidence="1">
        <text>IMP + diphosphate = hypoxanthine + 5-phospho-alpha-D-ribose 1-diphosphate</text>
        <dbReference type="Rhea" id="RHEA:17973"/>
        <dbReference type="ChEBI" id="CHEBI:17368"/>
        <dbReference type="ChEBI" id="CHEBI:33019"/>
        <dbReference type="ChEBI" id="CHEBI:58017"/>
        <dbReference type="ChEBI" id="CHEBI:58053"/>
    </reaction>
    <physiologicalReaction direction="right-to-left" evidence="1">
        <dbReference type="Rhea" id="RHEA:17975"/>
    </physiologicalReaction>
</comment>
<comment type="cofactor">
    <cofactor evidence="1">
        <name>Mg(2+)</name>
        <dbReference type="ChEBI" id="CHEBI:18420"/>
    </cofactor>
</comment>
<comment type="pathway">
    <text evidence="1">Purine metabolism; GMP biosynthesis via salvage pathway; GMP from guanine: step 1/1.</text>
</comment>
<comment type="pathway">
    <text evidence="1">Purine metabolism; XMP biosynthesis via salvage pathway; XMP from xanthine: step 1/1.</text>
</comment>
<comment type="subunit">
    <text evidence="1">Homotetramer.</text>
</comment>
<comment type="subcellular location">
    <subcellularLocation>
        <location evidence="1">Cell inner membrane</location>
        <topology evidence="1">Peripheral membrane protein</topology>
    </subcellularLocation>
</comment>
<comment type="similarity">
    <text evidence="1">Belongs to the purine/pyrimidine phosphoribosyltransferase family. XGPT subfamily.</text>
</comment>
<sequence>MANKFVITWDNMQMYTRQLAEQLLPADQWKGILAVSRGGLVPAAILARELNIRHVDTVCISSYDHDHQRDMTVVKAMEGDGEGFIIIDDLVDSGDTAVKLREMYPKGKLVTVCAKPAGVHLVDAYVVDIPQDTWIEQPWDMAVTYVDPIAKK</sequence>
<reference key="1">
    <citation type="journal article" date="2005" name="Proc. Natl. Acad. Sci. U.S.A.">
        <title>Complete genome sequence of Vibrio fischeri: a symbiotic bacterium with pathogenic congeners.</title>
        <authorList>
            <person name="Ruby E.G."/>
            <person name="Urbanowski M."/>
            <person name="Campbell J."/>
            <person name="Dunn A."/>
            <person name="Faini M."/>
            <person name="Gunsalus R."/>
            <person name="Lostroh P."/>
            <person name="Lupp C."/>
            <person name="McCann J."/>
            <person name="Millikan D."/>
            <person name="Schaefer A."/>
            <person name="Stabb E."/>
            <person name="Stevens A."/>
            <person name="Visick K."/>
            <person name="Whistler C."/>
            <person name="Greenberg E.P."/>
        </authorList>
    </citation>
    <scope>NUCLEOTIDE SEQUENCE [LARGE SCALE GENOMIC DNA]</scope>
    <source>
        <strain>ATCC 700601 / ES114</strain>
    </source>
</reference>
<feature type="chain" id="PRO_0000139691" description="Xanthine-guanine phosphoribosyltransferase">
    <location>
        <begin position="1"/>
        <end position="152"/>
    </location>
</feature>
<feature type="binding site" evidence="1">
    <location>
        <begin position="37"/>
        <end position="38"/>
    </location>
    <ligand>
        <name>5-phospho-alpha-D-ribose 1-diphosphate</name>
        <dbReference type="ChEBI" id="CHEBI:58017"/>
    </ligand>
</feature>
<feature type="binding site" evidence="1">
    <location>
        <position position="69"/>
    </location>
    <ligand>
        <name>5-phospho-alpha-D-ribose 1-diphosphate</name>
        <dbReference type="ChEBI" id="CHEBI:58017"/>
    </ligand>
</feature>
<feature type="binding site" evidence="1">
    <location>
        <position position="69"/>
    </location>
    <ligand>
        <name>GMP</name>
        <dbReference type="ChEBI" id="CHEBI:58115"/>
    </ligand>
</feature>
<feature type="binding site" evidence="1">
    <location>
        <begin position="88"/>
        <end position="96"/>
    </location>
    <ligand>
        <name>5-phospho-alpha-D-ribose 1-diphosphate</name>
        <dbReference type="ChEBI" id="CHEBI:58017"/>
    </ligand>
</feature>
<feature type="binding site" evidence="1">
    <location>
        <position position="89"/>
    </location>
    <ligand>
        <name>Mg(2+)</name>
        <dbReference type="ChEBI" id="CHEBI:18420"/>
    </ligand>
</feature>
<feature type="binding site" evidence="1">
    <location>
        <begin position="92"/>
        <end position="96"/>
    </location>
    <ligand>
        <name>GMP</name>
        <dbReference type="ChEBI" id="CHEBI:58115"/>
    </ligand>
</feature>
<feature type="binding site" evidence="1">
    <location>
        <position position="92"/>
    </location>
    <ligand>
        <name>guanine</name>
        <dbReference type="ChEBI" id="CHEBI:16235"/>
    </ligand>
</feature>
<feature type="binding site" evidence="1">
    <location>
        <position position="92"/>
    </location>
    <ligand>
        <name>xanthine</name>
        <dbReference type="ChEBI" id="CHEBI:17712"/>
    </ligand>
</feature>
<feature type="binding site" evidence="1">
    <location>
        <begin position="134"/>
        <end position="135"/>
    </location>
    <ligand>
        <name>GMP</name>
        <dbReference type="ChEBI" id="CHEBI:58115"/>
    </ligand>
</feature>
<feature type="binding site" evidence="1">
    <location>
        <position position="135"/>
    </location>
    <ligand>
        <name>guanine</name>
        <dbReference type="ChEBI" id="CHEBI:16235"/>
    </ligand>
</feature>
<feature type="binding site" evidence="1">
    <location>
        <position position="135"/>
    </location>
    <ligand>
        <name>xanthine</name>
        <dbReference type="ChEBI" id="CHEBI:17712"/>
    </ligand>
</feature>
<proteinExistence type="inferred from homology"/>
<evidence type="ECO:0000255" key="1">
    <source>
        <dbReference type="HAMAP-Rule" id="MF_01903"/>
    </source>
</evidence>
<organism>
    <name type="scientific">Aliivibrio fischeri (strain ATCC 700601 / ES114)</name>
    <name type="common">Vibrio fischeri</name>
    <dbReference type="NCBI Taxonomy" id="312309"/>
    <lineage>
        <taxon>Bacteria</taxon>
        <taxon>Pseudomonadati</taxon>
        <taxon>Pseudomonadota</taxon>
        <taxon>Gammaproteobacteria</taxon>
        <taxon>Vibrionales</taxon>
        <taxon>Vibrionaceae</taxon>
        <taxon>Aliivibrio</taxon>
    </lineage>
</organism>
<keyword id="KW-0997">Cell inner membrane</keyword>
<keyword id="KW-1003">Cell membrane</keyword>
<keyword id="KW-0328">Glycosyltransferase</keyword>
<keyword id="KW-0460">Magnesium</keyword>
<keyword id="KW-0472">Membrane</keyword>
<keyword id="KW-0479">Metal-binding</keyword>
<keyword id="KW-0660">Purine salvage</keyword>
<keyword id="KW-1185">Reference proteome</keyword>
<keyword id="KW-0808">Transferase</keyword>
<accession>Q5E6W3</accession>